<accession>A6VLV0</accession>
<proteinExistence type="inferred from homology"/>
<protein>
    <recommendedName>
        <fullName evidence="1">2,3-bisphosphoglycerate-dependent phosphoglycerate mutase</fullName>
        <shortName evidence="1">BPG-dependent PGAM</shortName>
        <shortName evidence="1">PGAM</shortName>
        <shortName evidence="1">Phosphoglyceromutase</shortName>
        <shortName evidence="1">dPGM</shortName>
        <ecNumber evidence="1">5.4.2.11</ecNumber>
    </recommendedName>
</protein>
<evidence type="ECO:0000255" key="1">
    <source>
        <dbReference type="HAMAP-Rule" id="MF_01039"/>
    </source>
</evidence>
<reference key="1">
    <citation type="journal article" date="2010" name="BMC Genomics">
        <title>A genomic perspective on the potential of Actinobacillus succinogenes for industrial succinate production.</title>
        <authorList>
            <person name="McKinlay J.B."/>
            <person name="Laivenieks M."/>
            <person name="Schindler B.D."/>
            <person name="McKinlay A.A."/>
            <person name="Siddaramappa S."/>
            <person name="Challacombe J.F."/>
            <person name="Lowry S.R."/>
            <person name="Clum A."/>
            <person name="Lapidus A.L."/>
            <person name="Burkhart K.B."/>
            <person name="Harkins V."/>
            <person name="Vieille C."/>
        </authorList>
    </citation>
    <scope>NUCLEOTIDE SEQUENCE [LARGE SCALE GENOMIC DNA]</scope>
    <source>
        <strain>ATCC 55618 / DSM 22257 / CCUG 43843 / 130Z</strain>
    </source>
</reference>
<comment type="function">
    <text evidence="1">Catalyzes the interconversion of 2-phosphoglycerate and 3-phosphoglycerate.</text>
</comment>
<comment type="catalytic activity">
    <reaction evidence="1">
        <text>(2R)-2-phosphoglycerate = (2R)-3-phosphoglycerate</text>
        <dbReference type="Rhea" id="RHEA:15901"/>
        <dbReference type="ChEBI" id="CHEBI:58272"/>
        <dbReference type="ChEBI" id="CHEBI:58289"/>
        <dbReference type="EC" id="5.4.2.11"/>
    </reaction>
</comment>
<comment type="pathway">
    <text evidence="1">Carbohydrate degradation; glycolysis; pyruvate from D-glyceraldehyde 3-phosphate: step 3/5.</text>
</comment>
<comment type="subunit">
    <text evidence="1">Homodimer.</text>
</comment>
<comment type="similarity">
    <text evidence="1">Belongs to the phosphoglycerate mutase family. BPG-dependent PGAM subfamily.</text>
</comment>
<sequence length="227" mass="25667">MQLVFIRHGLSEWNALNLFTGWRDVNLSEKGVEEAKEAGRKLKAAGFEFDIAFTSVLTRAIKTCNLVLEESDQLWVPQIKTWRLNERHYGGLQGLNKAEAAAEHGDEQVRIWRRSYDVLPPVLDPKDPNSAHNDRRYAHLPADVVPDCENLKVTLDRVLPFWEDQIAPAIKAGKRVLVAAHGNSLRALAKHIEGISDEDIMGLEIPTGQPLVYELDDNLKVLSKRYL</sequence>
<feature type="chain" id="PRO_1000072984" description="2,3-bisphosphoglycerate-dependent phosphoglycerate mutase">
    <location>
        <begin position="1"/>
        <end position="227"/>
    </location>
</feature>
<feature type="active site" description="Tele-phosphohistidine intermediate" evidence="1">
    <location>
        <position position="8"/>
    </location>
</feature>
<feature type="active site" description="Proton donor/acceptor" evidence="1">
    <location>
        <position position="86"/>
    </location>
</feature>
<feature type="binding site" evidence="1">
    <location>
        <begin position="7"/>
        <end position="14"/>
    </location>
    <ligand>
        <name>substrate</name>
    </ligand>
</feature>
<feature type="binding site" evidence="1">
    <location>
        <begin position="20"/>
        <end position="21"/>
    </location>
    <ligand>
        <name>substrate</name>
    </ligand>
</feature>
<feature type="binding site" evidence="1">
    <location>
        <position position="59"/>
    </location>
    <ligand>
        <name>substrate</name>
    </ligand>
</feature>
<feature type="binding site" evidence="1">
    <location>
        <begin position="86"/>
        <end position="89"/>
    </location>
    <ligand>
        <name>substrate</name>
    </ligand>
</feature>
<feature type="binding site" evidence="1">
    <location>
        <position position="97"/>
    </location>
    <ligand>
        <name>substrate</name>
    </ligand>
</feature>
<feature type="binding site" evidence="1">
    <location>
        <begin position="113"/>
        <end position="114"/>
    </location>
    <ligand>
        <name>substrate</name>
    </ligand>
</feature>
<feature type="binding site" evidence="1">
    <location>
        <begin position="182"/>
        <end position="183"/>
    </location>
    <ligand>
        <name>substrate</name>
    </ligand>
</feature>
<feature type="site" description="Transition state stabilizer" evidence="1">
    <location>
        <position position="181"/>
    </location>
</feature>
<keyword id="KW-0312">Gluconeogenesis</keyword>
<keyword id="KW-0324">Glycolysis</keyword>
<keyword id="KW-0413">Isomerase</keyword>
<keyword id="KW-1185">Reference proteome</keyword>
<dbReference type="EC" id="5.4.2.11" evidence="1"/>
<dbReference type="EMBL" id="CP000746">
    <property type="protein sequence ID" value="ABR73947.1"/>
    <property type="molecule type" value="Genomic_DNA"/>
</dbReference>
<dbReference type="RefSeq" id="WP_012072327.1">
    <property type="nucleotide sequence ID" value="NC_009655.1"/>
</dbReference>
<dbReference type="SMR" id="A6VLV0"/>
<dbReference type="STRING" id="339671.Asuc_0572"/>
<dbReference type="KEGG" id="asu:Asuc_0572"/>
<dbReference type="eggNOG" id="COG0588">
    <property type="taxonomic scope" value="Bacteria"/>
</dbReference>
<dbReference type="HOGENOM" id="CLU_033323_1_5_6"/>
<dbReference type="OrthoDB" id="9781415at2"/>
<dbReference type="UniPathway" id="UPA00109">
    <property type="reaction ID" value="UER00186"/>
</dbReference>
<dbReference type="Proteomes" id="UP000001114">
    <property type="component" value="Chromosome"/>
</dbReference>
<dbReference type="GO" id="GO:0004619">
    <property type="term" value="F:phosphoglycerate mutase activity"/>
    <property type="evidence" value="ECO:0007669"/>
    <property type="project" value="UniProtKB-EC"/>
</dbReference>
<dbReference type="GO" id="GO:0006094">
    <property type="term" value="P:gluconeogenesis"/>
    <property type="evidence" value="ECO:0007669"/>
    <property type="project" value="UniProtKB-UniRule"/>
</dbReference>
<dbReference type="GO" id="GO:0006096">
    <property type="term" value="P:glycolytic process"/>
    <property type="evidence" value="ECO:0007669"/>
    <property type="project" value="UniProtKB-UniRule"/>
</dbReference>
<dbReference type="CDD" id="cd07067">
    <property type="entry name" value="HP_PGM_like"/>
    <property type="match status" value="1"/>
</dbReference>
<dbReference type="FunFam" id="3.40.50.1240:FF:000003">
    <property type="entry name" value="2,3-bisphosphoglycerate-dependent phosphoglycerate mutase"/>
    <property type="match status" value="1"/>
</dbReference>
<dbReference type="Gene3D" id="3.40.50.1240">
    <property type="entry name" value="Phosphoglycerate mutase-like"/>
    <property type="match status" value="1"/>
</dbReference>
<dbReference type="HAMAP" id="MF_01039">
    <property type="entry name" value="PGAM_GpmA"/>
    <property type="match status" value="1"/>
</dbReference>
<dbReference type="InterPro" id="IPR013078">
    <property type="entry name" value="His_Pase_superF_clade-1"/>
</dbReference>
<dbReference type="InterPro" id="IPR029033">
    <property type="entry name" value="His_PPase_superfam"/>
</dbReference>
<dbReference type="InterPro" id="IPR005952">
    <property type="entry name" value="Phosphogly_mut1"/>
</dbReference>
<dbReference type="NCBIfam" id="TIGR01258">
    <property type="entry name" value="pgm_1"/>
    <property type="match status" value="1"/>
</dbReference>
<dbReference type="NCBIfam" id="NF010713">
    <property type="entry name" value="PRK14115.1"/>
    <property type="match status" value="1"/>
</dbReference>
<dbReference type="NCBIfam" id="NF010716">
    <property type="entry name" value="PRK14118.1"/>
    <property type="match status" value="1"/>
</dbReference>
<dbReference type="PANTHER" id="PTHR11931">
    <property type="entry name" value="PHOSPHOGLYCERATE MUTASE"/>
    <property type="match status" value="1"/>
</dbReference>
<dbReference type="Pfam" id="PF00300">
    <property type="entry name" value="His_Phos_1"/>
    <property type="match status" value="2"/>
</dbReference>
<dbReference type="PIRSF" id="PIRSF000709">
    <property type="entry name" value="6PFK_2-Ptase"/>
    <property type="match status" value="1"/>
</dbReference>
<dbReference type="SMART" id="SM00855">
    <property type="entry name" value="PGAM"/>
    <property type="match status" value="1"/>
</dbReference>
<dbReference type="SUPFAM" id="SSF53254">
    <property type="entry name" value="Phosphoglycerate mutase-like"/>
    <property type="match status" value="1"/>
</dbReference>
<organism>
    <name type="scientific">Actinobacillus succinogenes (strain ATCC 55618 / DSM 22257 / CCUG 43843 / 130Z)</name>
    <dbReference type="NCBI Taxonomy" id="339671"/>
    <lineage>
        <taxon>Bacteria</taxon>
        <taxon>Pseudomonadati</taxon>
        <taxon>Pseudomonadota</taxon>
        <taxon>Gammaproteobacteria</taxon>
        <taxon>Pasteurellales</taxon>
        <taxon>Pasteurellaceae</taxon>
        <taxon>Actinobacillus</taxon>
    </lineage>
</organism>
<name>GPMA_ACTSZ</name>
<gene>
    <name evidence="1" type="primary">gpmA</name>
    <name type="ordered locus">Asuc_0572</name>
</gene>